<keyword id="KW-0025">Alternative splicing</keyword>
<keyword id="KW-0175">Coiled coil</keyword>
<keyword id="KW-1267">Proteomics identification</keyword>
<keyword id="KW-1185">Reference proteome</keyword>
<protein>
    <recommendedName>
        <fullName>Coiled-coil domain-containing protein 180</fullName>
    </recommendedName>
</protein>
<feature type="chain" id="PRO_0000315233" description="Coiled-coil domain-containing protein 180">
    <location>
        <begin position="1"/>
        <end position="1701"/>
    </location>
</feature>
<feature type="region of interest" description="Disordered" evidence="2">
    <location>
        <begin position="1"/>
        <end position="35"/>
    </location>
</feature>
<feature type="region of interest" description="Disordered" evidence="2">
    <location>
        <begin position="657"/>
        <end position="808"/>
    </location>
</feature>
<feature type="region of interest" description="Disordered" evidence="2">
    <location>
        <begin position="1272"/>
        <end position="1291"/>
    </location>
</feature>
<feature type="region of interest" description="Disordered" evidence="2">
    <location>
        <begin position="1319"/>
        <end position="1354"/>
    </location>
</feature>
<feature type="coiled-coil region" evidence="1">
    <location>
        <begin position="171"/>
        <end position="198"/>
    </location>
</feature>
<feature type="coiled-coil region" evidence="1">
    <location>
        <begin position="757"/>
        <end position="804"/>
    </location>
</feature>
<feature type="compositionally biased region" description="Basic residues" evidence="2">
    <location>
        <begin position="661"/>
        <end position="671"/>
    </location>
</feature>
<feature type="compositionally biased region" description="Basic and acidic residues" evidence="2">
    <location>
        <begin position="672"/>
        <end position="682"/>
    </location>
</feature>
<feature type="compositionally biased region" description="Polar residues" evidence="2">
    <location>
        <begin position="683"/>
        <end position="692"/>
    </location>
</feature>
<feature type="compositionally biased region" description="Acidic residues" evidence="2">
    <location>
        <begin position="696"/>
        <end position="705"/>
    </location>
</feature>
<feature type="compositionally biased region" description="Basic and acidic residues" evidence="2">
    <location>
        <begin position="755"/>
        <end position="766"/>
    </location>
</feature>
<feature type="compositionally biased region" description="Acidic residues" evidence="2">
    <location>
        <begin position="767"/>
        <end position="808"/>
    </location>
</feature>
<feature type="splice variant" id="VSP_059687" description="In isoform 3.">
    <location>
        <begin position="1"/>
        <end position="1578"/>
    </location>
</feature>
<feature type="sequence variant" id="VAR_038151" description="In dbSNP:rs7864805.">
    <original>P</original>
    <variation>H</variation>
    <location>
        <position position="162"/>
    </location>
</feature>
<feature type="sequence variant" id="VAR_038152" description="In dbSNP:rs17855671.">
    <original>S</original>
    <variation>R</variation>
    <location>
        <position position="183"/>
    </location>
</feature>
<feature type="sequence variant" id="VAR_038153" description="In dbSNP:rs10981558.">
    <original>L</original>
    <variation>H</variation>
    <location>
        <position position="234"/>
    </location>
</feature>
<feature type="sequence variant" id="VAR_061250" description="In dbSNP:rs61261278.">
    <original>P</original>
    <variation>R</variation>
    <location>
        <position position="409"/>
    </location>
</feature>
<feature type="sequence variant" id="VAR_038154" description="In dbSNP:rs12353306.">
    <original>E</original>
    <variation>K</variation>
    <location>
        <position position="778"/>
    </location>
</feature>
<feature type="sequence variant" id="VAR_038155" description="In dbSNP:rs2061634.">
    <original>S</original>
    <variation>C</variation>
    <location>
        <position position="856"/>
    </location>
</feature>
<feature type="sequence variant" id="VAR_038156" description="In dbSNP:rs3747495.">
    <original>F</original>
    <variation>L</variation>
    <location>
        <position position="1175"/>
    </location>
</feature>
<feature type="sequence variant" id="VAR_038157" description="In dbSNP:rs2306093.">
    <original>D</original>
    <variation>N</variation>
    <location>
        <position position="1573"/>
    </location>
</feature>
<feature type="sequence conflict" description="In Ref. 2; CAH18175." evidence="3" ref="2">
    <original>L</original>
    <variation>F</variation>
    <location>
        <position position="209"/>
    </location>
</feature>
<feature type="sequence conflict" description="In Ref. 2; CAH18175." evidence="3" ref="2">
    <original>K</original>
    <variation>M</variation>
    <location>
        <position position="283"/>
    </location>
</feature>
<feature type="sequence conflict" description="In Ref. 2; CAH18175." evidence="3" ref="2">
    <original>L</original>
    <variation>P</variation>
    <location>
        <position position="1112"/>
    </location>
</feature>
<feature type="sequence conflict" description="In Ref. 2; CAH18175." evidence="3" ref="2">
    <original>N</original>
    <variation>I</variation>
    <location>
        <position position="1206"/>
    </location>
</feature>
<feature type="sequence conflict" description="In Ref. 2; CAH18175." evidence="3" ref="2">
    <original>E</original>
    <variation>D</variation>
    <location>
        <position position="1651"/>
    </location>
</feature>
<gene>
    <name type="primary">CCDC180</name>
    <name type="synonym">C9orf174</name>
    <name type="synonym">KIAA1529</name>
</gene>
<organism>
    <name type="scientific">Homo sapiens</name>
    <name type="common">Human</name>
    <dbReference type="NCBI Taxonomy" id="9606"/>
    <lineage>
        <taxon>Eukaryota</taxon>
        <taxon>Metazoa</taxon>
        <taxon>Chordata</taxon>
        <taxon>Craniata</taxon>
        <taxon>Vertebrata</taxon>
        <taxon>Euteleostomi</taxon>
        <taxon>Mammalia</taxon>
        <taxon>Eutheria</taxon>
        <taxon>Euarchontoglires</taxon>
        <taxon>Primates</taxon>
        <taxon>Haplorrhini</taxon>
        <taxon>Catarrhini</taxon>
        <taxon>Hominidae</taxon>
        <taxon>Homo</taxon>
    </lineage>
</organism>
<comment type="alternative products">
    <event type="alternative splicing"/>
    <isoform>
        <id>Q9P1Z9-2</id>
        <name>2</name>
        <sequence type="displayed"/>
    </isoform>
    <isoform>
        <id>Q9P1Z9-3</id>
        <name>3</name>
        <sequence type="described" ref="VSP_059687"/>
    </isoform>
</comment>
<comment type="sequence caution" evidence="3">
    <conflict type="miscellaneous discrepancy">
        <sequence resource="EMBL-CDS" id="AAI12931"/>
    </conflict>
    <text>Readthrough transcript which is the product of an upstream read-through pseudogene (SUGT1P4-STRA6LP) with CCDC180.</text>
</comment>
<comment type="sequence caution" evidence="3">
    <conflict type="miscellaneous discrepancy">
        <sequence resource="EMBL-CDS" id="BAA96053"/>
    </conflict>
    <text>Readthrough transcript which is the product of an upstream read-through pseudogene (SUGT1P4-STRA6LP) with CCDC180.</text>
</comment>
<comment type="sequence caution" evidence="3">
    <conflict type="frameshift">
        <sequence resource="EMBL-CDS" id="CAH10534"/>
    </conflict>
</comment>
<comment type="sequence caution" evidence="3">
    <conflict type="miscellaneous discrepancy">
        <sequence resource="EMBL-CDS" id="CAH10534"/>
    </conflict>
    <text>Intron retention.</text>
</comment>
<comment type="sequence caution" evidence="3">
    <conflict type="erroneous initiation">
        <sequence resource="EMBL-CDS" id="CAH18175"/>
    </conflict>
    <text>Extended N-terminus.</text>
</comment>
<accession>Q9P1Z9</accession>
<accession>Q2KHR6</accession>
<accession>Q5VV25</accession>
<accession>Q68DP5</accession>
<accession>Q69YV9</accession>
<accession>Q6AHY0</accession>
<reference key="1">
    <citation type="journal article" date="2000" name="DNA Res.">
        <title>Prediction of the coding sequences of unidentified human genes. XVII. The complete sequences of 100 new cDNA clones from brain which code for large proteins in vitro.</title>
        <authorList>
            <person name="Nagase T."/>
            <person name="Kikuno R."/>
            <person name="Ishikawa K."/>
            <person name="Hirosawa M."/>
            <person name="Ohara O."/>
        </authorList>
    </citation>
    <scope>NUCLEOTIDE SEQUENCE [LARGE SCALE MRNA] (ISOFORM 2)</scope>
    <source>
        <tissue>Brain</tissue>
    </source>
</reference>
<reference key="2">
    <citation type="journal article" date="2007" name="BMC Genomics">
        <title>The full-ORF clone resource of the German cDNA consortium.</title>
        <authorList>
            <person name="Bechtel S."/>
            <person name="Rosenfelder H."/>
            <person name="Duda A."/>
            <person name="Schmidt C.P."/>
            <person name="Ernst U."/>
            <person name="Wellenreuther R."/>
            <person name="Mehrle A."/>
            <person name="Schuster C."/>
            <person name="Bahr A."/>
            <person name="Bloecker H."/>
            <person name="Heubner D."/>
            <person name="Hoerlein A."/>
            <person name="Michel G."/>
            <person name="Wedler H."/>
            <person name="Koehrer K."/>
            <person name="Ottenwaelder B."/>
            <person name="Poustka A."/>
            <person name="Wiemann S."/>
            <person name="Schupp I."/>
        </authorList>
    </citation>
    <scope>NUCLEOTIDE SEQUENCE [LARGE SCALE MRNA] (ISOFORMS 2 AND 3)</scope>
    <source>
        <tissue>Testis</tissue>
    </source>
</reference>
<reference key="3">
    <citation type="journal article" date="2004" name="Nature">
        <title>DNA sequence and analysis of human chromosome 9.</title>
        <authorList>
            <person name="Humphray S.J."/>
            <person name="Oliver K."/>
            <person name="Hunt A.R."/>
            <person name="Plumb R.W."/>
            <person name="Loveland J.E."/>
            <person name="Howe K.L."/>
            <person name="Andrews T.D."/>
            <person name="Searle S."/>
            <person name="Hunt S.E."/>
            <person name="Scott C.E."/>
            <person name="Jones M.C."/>
            <person name="Ainscough R."/>
            <person name="Almeida J.P."/>
            <person name="Ambrose K.D."/>
            <person name="Ashwell R.I.S."/>
            <person name="Babbage A.K."/>
            <person name="Babbage S."/>
            <person name="Bagguley C.L."/>
            <person name="Bailey J."/>
            <person name="Banerjee R."/>
            <person name="Barker D.J."/>
            <person name="Barlow K.F."/>
            <person name="Bates K."/>
            <person name="Beasley H."/>
            <person name="Beasley O."/>
            <person name="Bird C.P."/>
            <person name="Bray-Allen S."/>
            <person name="Brown A.J."/>
            <person name="Brown J.Y."/>
            <person name="Burford D."/>
            <person name="Burrill W."/>
            <person name="Burton J."/>
            <person name="Carder C."/>
            <person name="Carter N.P."/>
            <person name="Chapman J.C."/>
            <person name="Chen Y."/>
            <person name="Clarke G."/>
            <person name="Clark S.Y."/>
            <person name="Clee C.M."/>
            <person name="Clegg S."/>
            <person name="Collier R.E."/>
            <person name="Corby N."/>
            <person name="Crosier M."/>
            <person name="Cummings A.T."/>
            <person name="Davies J."/>
            <person name="Dhami P."/>
            <person name="Dunn M."/>
            <person name="Dutta I."/>
            <person name="Dyer L.W."/>
            <person name="Earthrowl M.E."/>
            <person name="Faulkner L."/>
            <person name="Fleming C.J."/>
            <person name="Frankish A."/>
            <person name="Frankland J.A."/>
            <person name="French L."/>
            <person name="Fricker D.G."/>
            <person name="Garner P."/>
            <person name="Garnett J."/>
            <person name="Ghori J."/>
            <person name="Gilbert J.G.R."/>
            <person name="Glison C."/>
            <person name="Grafham D.V."/>
            <person name="Gribble S."/>
            <person name="Griffiths C."/>
            <person name="Griffiths-Jones S."/>
            <person name="Grocock R."/>
            <person name="Guy J."/>
            <person name="Hall R.E."/>
            <person name="Hammond S."/>
            <person name="Harley J.L."/>
            <person name="Harrison E.S.I."/>
            <person name="Hart E.A."/>
            <person name="Heath P.D."/>
            <person name="Henderson C.D."/>
            <person name="Hopkins B.L."/>
            <person name="Howard P.J."/>
            <person name="Howden P.J."/>
            <person name="Huckle E."/>
            <person name="Johnson C."/>
            <person name="Johnson D."/>
            <person name="Joy A.A."/>
            <person name="Kay M."/>
            <person name="Keenan S."/>
            <person name="Kershaw J.K."/>
            <person name="Kimberley A.M."/>
            <person name="King A."/>
            <person name="Knights A."/>
            <person name="Laird G.K."/>
            <person name="Langford C."/>
            <person name="Lawlor S."/>
            <person name="Leongamornlert D.A."/>
            <person name="Leversha M."/>
            <person name="Lloyd C."/>
            <person name="Lloyd D.M."/>
            <person name="Lovell J."/>
            <person name="Martin S."/>
            <person name="Mashreghi-Mohammadi M."/>
            <person name="Matthews L."/>
            <person name="McLaren S."/>
            <person name="McLay K.E."/>
            <person name="McMurray A."/>
            <person name="Milne S."/>
            <person name="Nickerson T."/>
            <person name="Nisbett J."/>
            <person name="Nordsiek G."/>
            <person name="Pearce A.V."/>
            <person name="Peck A.I."/>
            <person name="Porter K.M."/>
            <person name="Pandian R."/>
            <person name="Pelan S."/>
            <person name="Phillimore B."/>
            <person name="Povey S."/>
            <person name="Ramsey Y."/>
            <person name="Rand V."/>
            <person name="Scharfe M."/>
            <person name="Sehra H.K."/>
            <person name="Shownkeen R."/>
            <person name="Sims S.K."/>
            <person name="Skuce C.D."/>
            <person name="Smith M."/>
            <person name="Steward C.A."/>
            <person name="Swarbreck D."/>
            <person name="Sycamore N."/>
            <person name="Tester J."/>
            <person name="Thorpe A."/>
            <person name="Tracey A."/>
            <person name="Tromans A."/>
            <person name="Thomas D.W."/>
            <person name="Wall M."/>
            <person name="Wallis J.M."/>
            <person name="West A.P."/>
            <person name="Whitehead S.L."/>
            <person name="Willey D.L."/>
            <person name="Williams S.A."/>
            <person name="Wilming L."/>
            <person name="Wray P.W."/>
            <person name="Young L."/>
            <person name="Ashurst J.L."/>
            <person name="Coulson A."/>
            <person name="Blocker H."/>
            <person name="Durbin R.M."/>
            <person name="Sulston J.E."/>
            <person name="Hubbard T."/>
            <person name="Jackson M.J."/>
            <person name="Bentley D.R."/>
            <person name="Beck S."/>
            <person name="Rogers J."/>
            <person name="Dunham I."/>
        </authorList>
    </citation>
    <scope>NUCLEOTIDE SEQUENCE [LARGE SCALE GENOMIC DNA]</scope>
</reference>
<reference key="4">
    <citation type="submission" date="2005-07" db="EMBL/GenBank/DDBJ databases">
        <authorList>
            <person name="Mural R.J."/>
            <person name="Istrail S."/>
            <person name="Sutton G.G."/>
            <person name="Florea L."/>
            <person name="Halpern A.L."/>
            <person name="Mobarry C.M."/>
            <person name="Lippert R."/>
            <person name="Walenz B."/>
            <person name="Shatkay H."/>
            <person name="Dew I."/>
            <person name="Miller J.R."/>
            <person name="Flanigan M.J."/>
            <person name="Edwards N.J."/>
            <person name="Bolanos R."/>
            <person name="Fasulo D."/>
            <person name="Halldorsson B.V."/>
            <person name="Hannenhalli S."/>
            <person name="Turner R."/>
            <person name="Yooseph S."/>
            <person name="Lu F."/>
            <person name="Nusskern D.R."/>
            <person name="Shue B.C."/>
            <person name="Zheng X.H."/>
            <person name="Zhong F."/>
            <person name="Delcher A.L."/>
            <person name="Huson D.H."/>
            <person name="Kravitz S.A."/>
            <person name="Mouchard L."/>
            <person name="Reinert K."/>
            <person name="Remington K.A."/>
            <person name="Clark A.G."/>
            <person name="Waterman M.S."/>
            <person name="Eichler E.E."/>
            <person name="Adams M.D."/>
            <person name="Hunkapiller M.W."/>
            <person name="Myers E.W."/>
            <person name="Venter J.C."/>
        </authorList>
    </citation>
    <scope>NUCLEOTIDE SEQUENCE [LARGE SCALE GENOMIC DNA]</scope>
</reference>
<reference key="5">
    <citation type="journal article" date="2004" name="Genome Res.">
        <title>The status, quality, and expansion of the NIH full-length cDNA project: the Mammalian Gene Collection (MGC).</title>
        <authorList>
            <consortium name="The MGC Project Team"/>
        </authorList>
    </citation>
    <scope>NUCLEOTIDE SEQUENCE [LARGE SCALE MRNA] OF 1-583 (ISOFORM 2)</scope>
    <source>
        <tissue>Uterus</tissue>
    </source>
</reference>
<evidence type="ECO:0000255" key="1"/>
<evidence type="ECO:0000256" key="2">
    <source>
        <dbReference type="SAM" id="MobiDB-lite"/>
    </source>
</evidence>
<evidence type="ECO:0000305" key="3"/>
<dbReference type="EMBL" id="AB040962">
    <property type="protein sequence ID" value="BAA96053.1"/>
    <property type="status" value="ALT_SEQ"/>
    <property type="molecule type" value="mRNA"/>
</dbReference>
<dbReference type="EMBL" id="AL137557">
    <property type="protein sequence ID" value="CAH10701.1"/>
    <property type="molecule type" value="mRNA"/>
</dbReference>
<dbReference type="EMBL" id="CR627453">
    <property type="protein sequence ID" value="CAH10534.1"/>
    <property type="status" value="ALT_SEQ"/>
    <property type="molecule type" value="mRNA"/>
</dbReference>
<dbReference type="EMBL" id="CR749320">
    <property type="protein sequence ID" value="CAH18175.1"/>
    <property type="status" value="ALT_INIT"/>
    <property type="molecule type" value="mRNA"/>
</dbReference>
<dbReference type="EMBL" id="AL512590">
    <property type="status" value="NOT_ANNOTATED_CDS"/>
    <property type="molecule type" value="Genomic_DNA"/>
</dbReference>
<dbReference type="EMBL" id="CH471105">
    <property type="protein sequence ID" value="EAW58840.1"/>
    <property type="molecule type" value="Genomic_DNA"/>
</dbReference>
<dbReference type="EMBL" id="BC112930">
    <property type="protein sequence ID" value="AAI12931.1"/>
    <property type="status" value="ALT_SEQ"/>
    <property type="molecule type" value="mRNA"/>
</dbReference>
<dbReference type="RefSeq" id="NP_065944.2">
    <property type="nucleotide sequence ID" value="NM_020893.3"/>
</dbReference>
<dbReference type="SMR" id="Q9P1Z9"/>
<dbReference type="FunCoup" id="Q9P1Z9">
    <property type="interactions" value="117"/>
</dbReference>
<dbReference type="IntAct" id="Q9P1Z9">
    <property type="interactions" value="23"/>
</dbReference>
<dbReference type="MINT" id="Q9P1Z9"/>
<dbReference type="STRING" id="9606.ENSP00000501085"/>
<dbReference type="iPTMnet" id="Q9P1Z9"/>
<dbReference type="PhosphoSitePlus" id="Q9P1Z9"/>
<dbReference type="BioMuta" id="CCDC180"/>
<dbReference type="DMDM" id="166218818"/>
<dbReference type="jPOST" id="Q9P1Z9"/>
<dbReference type="MassIVE" id="Q9P1Z9"/>
<dbReference type="PaxDb" id="9606-ENSP00000434727"/>
<dbReference type="PeptideAtlas" id="Q9P1Z9"/>
<dbReference type="ProteomicsDB" id="83689">
    <molecule id="Q9P1Z9-2"/>
</dbReference>
<dbReference type="ProteomicsDB" id="83690">
    <molecule id="Q9P1Z9-3"/>
</dbReference>
<dbReference type="DNASU" id="100499483"/>
<dbReference type="GeneID" id="100499483"/>
<dbReference type="KEGG" id="hsa:100499483"/>
<dbReference type="UCSC" id="uc004axg.3">
    <molecule id="Q9P1Z9-2"/>
    <property type="organism name" value="human"/>
</dbReference>
<dbReference type="AGR" id="HGNC:29303"/>
<dbReference type="CTD" id="100499483"/>
<dbReference type="DisGeNET" id="100499483"/>
<dbReference type="GeneCards" id="CCDC180"/>
<dbReference type="HGNC" id="HGNC:29303">
    <property type="gene designation" value="CCDC180"/>
</dbReference>
<dbReference type="neXtProt" id="NX_Q9P1Z9"/>
<dbReference type="PharmGKB" id="PA165585576"/>
<dbReference type="VEuPathDB" id="HostDB:ENSG00000197816"/>
<dbReference type="eggNOG" id="ENOG502QT47">
    <property type="taxonomic scope" value="Eukaryota"/>
</dbReference>
<dbReference type="HOGENOM" id="CLU_003321_0_0_1"/>
<dbReference type="InParanoid" id="Q9P1Z9"/>
<dbReference type="OrthoDB" id="431588at2759"/>
<dbReference type="PAN-GO" id="Q9P1Z9">
    <property type="GO annotations" value="0 GO annotations based on evolutionary models"/>
</dbReference>
<dbReference type="PhylomeDB" id="Q9P1Z9"/>
<dbReference type="TreeFam" id="TF329281"/>
<dbReference type="PathwayCommons" id="Q9P1Z9"/>
<dbReference type="SignaLink" id="Q9P1Z9"/>
<dbReference type="Pharos" id="Q9P1Z9">
    <property type="development level" value="Tdark"/>
</dbReference>
<dbReference type="PRO" id="PR:Q9P1Z9"/>
<dbReference type="Proteomes" id="UP000005640">
    <property type="component" value="Unplaced"/>
</dbReference>
<dbReference type="RNAct" id="Q9P1Z9">
    <property type="molecule type" value="protein"/>
</dbReference>
<dbReference type="GO" id="GO:0070062">
    <property type="term" value="C:extracellular exosome"/>
    <property type="evidence" value="ECO:0007005"/>
    <property type="project" value="UniProtKB"/>
</dbReference>
<dbReference type="InterPro" id="IPR028089">
    <property type="entry name" value="DUF4455"/>
</dbReference>
<dbReference type="InterPro" id="IPR027914">
    <property type="entry name" value="DUF4456"/>
</dbReference>
<dbReference type="PANTHER" id="PTHR21444">
    <property type="entry name" value="COILED-COIL DOMAIN-CONTAINING PROTEIN 180"/>
    <property type="match status" value="1"/>
</dbReference>
<dbReference type="PANTHER" id="PTHR21444:SF14">
    <property type="entry name" value="COILED-COIL DOMAIN-CONTAINING PROTEIN 180"/>
    <property type="match status" value="1"/>
</dbReference>
<dbReference type="Pfam" id="PF14643">
    <property type="entry name" value="DUF4455"/>
    <property type="match status" value="1"/>
</dbReference>
<dbReference type="Pfam" id="PF14644">
    <property type="entry name" value="DUF4456"/>
    <property type="match status" value="1"/>
</dbReference>
<name>CC180_HUMAN</name>
<sequence>MRGGENRPPARVQSSSEELELRHQSLDAFPGRRLPGRGIQPAAKMSSVGKVTQVPNGKAYQQIFQAEVQLVHSLAATRKRAAERSVTLKSGRIPMMKKVETPEGEVMSPRQQKWMHSLPNDWIMENPVLHREKERAKREKARESENTIAAREVRGLMDTIVPEKISTSTFQRQAEHKRKSYESALASFQEEIAQVGKEMEPLIVDTGGLFLKKLTESDEEMNRLFLKVENDTNLEDYTIQALLELWDKVAGRLLLRKQEIKELDEALHSLEFSRTDKLKSVLKKYAEVIEKTSYLMRPEVYRLINEEAMVMNYALLGNRKALAQLFVNLMESTLQQELDSRHRWQGLVDTWKALKKEALLQSFSEFMASESIHTPPAVTKELEVMLKTQNVLQQRRLKHLCTICDLLPPSYSKTQLTEWHSSLNSLNKELDTYHVDCMMRIRLLYEKTWQECLMHVQNCKKQLLDWKAFTEEEAETLVNQFFFQMVGALQGKVEEDLELLDKSFETLADQTEWQSSHLFKYFQEVVQLWEAHQSELLVQELELEKRMEQHRQKHSLESQVQEAHLDRLLDQLRQQSDKETLAFHLEKVKDYLKNMKSRYECFHTLLTKEVMEYPAIMLKELNSYSSALSQYFFVREIFEQNLAGEVIFKFRQPEAHEKPSQKRVKKLRKKQGSKEDMTRSEESISSGTSTARSVEEVEEENDQEMESFITEEVLGQQKKSPLHAKMDESKEGSIQGLEEMQVEREGSLNPSLNEENVKGQGEKKEESEEEDEKEEEEEEEKLEEEKEEKEAQEEQESLSVGEEEDKEEGLEEIYYEDMESFTISSGNTYFVFVPLEEEHCRKSHSTFSAMFINDTSSAKFIEQVTIPSRLILEIKKQLRAGFFEHLEKWFDQCSLNTRVTVATKINELDSELELHLHLHQPRAQQIEKDIHNVRAAELLLHQEQLDSHCAGVTETLKKKRLMFCQFQEEQNVRSKNFRLKIYDMEHIFLNATRSQKLVTLSNTLHQELLSYVDVTQVSLRSFRQYLEESLGKLRYSNIEFIKHCRLFSEGGNFSPKEINSLCSRLEKEAARIELVESVIMLNMEKLENEYLDQANDVINKFESKFHNLSVDLIFIEKIQRLLTNLQVKIKCQVAKSNSQTNGLNFSLQQLQNKIKTCQESRGEKTTVTTEELLSFVQTWKEKLSQRIQYLNCSLDRVSMTELVFTNTILKDQEEDSDILTSSEALEEEAKLDVVTPESFTQLSRVGKPLIEDPAVDVIRKLLQLPNTKWPTHHCDKDPSQTGRGAWACGSRGSSEAGAGGAVCSPPVLCSCPGPSSPKGFKRHRCQPENSGKKAVPSASATSAGSFTPHPKPNKMERKYRVLGDKPPPAAEDFKGIILTLLWESSENLLTVAEEFYRKEKRPVTRPDCMCDTFDQCAENISKKILEYQSQANKYHNSCLIELRIQIRRFEELLPQVCWLVMENFKEHHWKKFFTSVKEIRGQFEEQQKRLEKRKDKNAQKLHLNLGHPVHFQEMESLHLSEEERQEELDSMIRMNKEKLEECTRRNGQVFITNLATFTEKFLLQLDEVVTIDDVQVARMEPPKQKLSMLIRRKLAGLSLKEESEKPLIERGSRKWPGIKPTEVTIQNKILLQPTSSISTTKTTLGHLAAVEARDAVYLKYLASFEEELKRIQDDCTSQIKEAQRWKDSWKQSLHTIQGLYV</sequence>
<proteinExistence type="evidence at protein level"/>